<name>YCAD_SHIDS</name>
<organism>
    <name type="scientific">Shigella dysenteriae serotype 1 (strain Sd197)</name>
    <dbReference type="NCBI Taxonomy" id="300267"/>
    <lineage>
        <taxon>Bacteria</taxon>
        <taxon>Pseudomonadati</taxon>
        <taxon>Pseudomonadota</taxon>
        <taxon>Gammaproteobacteria</taxon>
        <taxon>Enterobacterales</taxon>
        <taxon>Enterobacteriaceae</taxon>
        <taxon>Shigella</taxon>
    </lineage>
</organism>
<dbReference type="EMBL" id="CP000034">
    <property type="protein sequence ID" value="ABB62439.1"/>
    <property type="molecule type" value="Genomic_DNA"/>
</dbReference>
<dbReference type="RefSeq" id="WP_000109295.1">
    <property type="nucleotide sequence ID" value="NC_007606.1"/>
</dbReference>
<dbReference type="RefSeq" id="YP_403930.1">
    <property type="nucleotide sequence ID" value="NC_007606.1"/>
</dbReference>
<dbReference type="SMR" id="Q32E16"/>
<dbReference type="STRING" id="300267.SDY_2363"/>
<dbReference type="EnsemblBacteria" id="ABB62439">
    <property type="protein sequence ID" value="ABB62439"/>
    <property type="gene ID" value="SDY_2363"/>
</dbReference>
<dbReference type="KEGG" id="sdy:SDY_2363"/>
<dbReference type="PATRIC" id="fig|300267.13.peg.2854"/>
<dbReference type="HOGENOM" id="CLU_035018_1_2_6"/>
<dbReference type="Proteomes" id="UP000002716">
    <property type="component" value="Chromosome"/>
</dbReference>
<dbReference type="GO" id="GO:0005886">
    <property type="term" value="C:plasma membrane"/>
    <property type="evidence" value="ECO:0007669"/>
    <property type="project" value="UniProtKB-SubCell"/>
</dbReference>
<dbReference type="GO" id="GO:0022857">
    <property type="term" value="F:transmembrane transporter activity"/>
    <property type="evidence" value="ECO:0007669"/>
    <property type="project" value="UniProtKB-UniRule"/>
</dbReference>
<dbReference type="CDD" id="cd17477">
    <property type="entry name" value="MFS_YcaD_like"/>
    <property type="match status" value="1"/>
</dbReference>
<dbReference type="FunFam" id="1.20.1250.20:FF:000041">
    <property type="entry name" value="Uncharacterized MFS-type transporter YcaD"/>
    <property type="match status" value="1"/>
</dbReference>
<dbReference type="FunFam" id="1.20.1250.20:FF:000066">
    <property type="entry name" value="Uncharacterized MFS-type transporter YcaD"/>
    <property type="match status" value="1"/>
</dbReference>
<dbReference type="Gene3D" id="1.20.1250.20">
    <property type="entry name" value="MFS general substrate transporter like domains"/>
    <property type="match status" value="2"/>
</dbReference>
<dbReference type="HAMAP" id="MF_01149">
    <property type="entry name" value="MFS_YcaD"/>
    <property type="match status" value="1"/>
</dbReference>
<dbReference type="InterPro" id="IPR011701">
    <property type="entry name" value="MFS"/>
</dbReference>
<dbReference type="InterPro" id="IPR020846">
    <property type="entry name" value="MFS_dom"/>
</dbReference>
<dbReference type="InterPro" id="IPR036259">
    <property type="entry name" value="MFS_trans_sf"/>
</dbReference>
<dbReference type="InterPro" id="IPR023745">
    <property type="entry name" value="MFS_YcaD"/>
</dbReference>
<dbReference type="InterPro" id="IPR047200">
    <property type="entry name" value="MFS_YcaD-like"/>
</dbReference>
<dbReference type="NCBIfam" id="NF002962">
    <property type="entry name" value="PRK03633.1"/>
    <property type="match status" value="1"/>
</dbReference>
<dbReference type="PANTHER" id="PTHR23521">
    <property type="entry name" value="TRANSPORTER MFS SUPERFAMILY"/>
    <property type="match status" value="1"/>
</dbReference>
<dbReference type="PANTHER" id="PTHR23521:SF2">
    <property type="entry name" value="TRANSPORTER MFS SUPERFAMILY"/>
    <property type="match status" value="1"/>
</dbReference>
<dbReference type="Pfam" id="PF07690">
    <property type="entry name" value="MFS_1"/>
    <property type="match status" value="1"/>
</dbReference>
<dbReference type="SUPFAM" id="SSF103473">
    <property type="entry name" value="MFS general substrate transporter"/>
    <property type="match status" value="1"/>
</dbReference>
<dbReference type="PROSITE" id="PS50850">
    <property type="entry name" value="MFS"/>
    <property type="match status" value="1"/>
</dbReference>
<feature type="chain" id="PRO_1000065496" description="Uncharacterized MFS-type transporter YcaD">
    <location>
        <begin position="1"/>
        <end position="382"/>
    </location>
</feature>
<feature type="transmembrane region" description="Helical" evidence="1">
    <location>
        <begin position="14"/>
        <end position="34"/>
    </location>
</feature>
<feature type="transmembrane region" description="Helical" evidence="1">
    <location>
        <begin position="45"/>
        <end position="65"/>
    </location>
</feature>
<feature type="transmembrane region" description="Helical" evidence="1">
    <location>
        <begin position="79"/>
        <end position="99"/>
    </location>
</feature>
<feature type="transmembrane region" description="Helical" evidence="1">
    <location>
        <begin position="102"/>
        <end position="122"/>
    </location>
</feature>
<feature type="transmembrane region" description="Helical" evidence="1">
    <location>
        <begin position="131"/>
        <end position="151"/>
    </location>
</feature>
<feature type="transmembrane region" description="Helical" evidence="1">
    <location>
        <begin position="157"/>
        <end position="177"/>
    </location>
</feature>
<feature type="transmembrane region" description="Helical" evidence="1">
    <location>
        <begin position="204"/>
        <end position="224"/>
    </location>
</feature>
<feature type="transmembrane region" description="Helical" evidence="1">
    <location>
        <begin position="235"/>
        <end position="255"/>
    </location>
</feature>
<feature type="transmembrane region" description="Helical" evidence="1">
    <location>
        <begin position="270"/>
        <end position="290"/>
    </location>
</feature>
<feature type="transmembrane region" description="Helical" evidence="1">
    <location>
        <begin position="291"/>
        <end position="311"/>
    </location>
</feature>
<feature type="transmembrane region" description="Helical" evidence="1">
    <location>
        <begin position="325"/>
        <end position="345"/>
    </location>
</feature>
<feature type="transmembrane region" description="Helical" evidence="1">
    <location>
        <begin position="348"/>
        <end position="368"/>
    </location>
</feature>
<comment type="subcellular location">
    <subcellularLocation>
        <location evidence="1">Cell inner membrane</location>
        <topology evidence="1">Multi-pass membrane protein</topology>
    </subcellularLocation>
</comment>
<comment type="similarity">
    <text evidence="1">Belongs to the major facilitator superfamily. YcaD (TC 2.A.1.26) family.</text>
</comment>
<reference key="1">
    <citation type="journal article" date="2005" name="Nucleic Acids Res.">
        <title>Genome dynamics and diversity of Shigella species, the etiologic agents of bacillary dysentery.</title>
        <authorList>
            <person name="Yang F."/>
            <person name="Yang J."/>
            <person name="Zhang X."/>
            <person name="Chen L."/>
            <person name="Jiang Y."/>
            <person name="Yan Y."/>
            <person name="Tang X."/>
            <person name="Wang J."/>
            <person name="Xiong Z."/>
            <person name="Dong J."/>
            <person name="Xue Y."/>
            <person name="Zhu Y."/>
            <person name="Xu X."/>
            <person name="Sun L."/>
            <person name="Chen S."/>
            <person name="Nie H."/>
            <person name="Peng J."/>
            <person name="Xu J."/>
            <person name="Wang Y."/>
            <person name="Yuan Z."/>
            <person name="Wen Y."/>
            <person name="Yao Z."/>
            <person name="Shen Y."/>
            <person name="Qiang B."/>
            <person name="Hou Y."/>
            <person name="Yu J."/>
            <person name="Jin Q."/>
        </authorList>
    </citation>
    <scope>NUCLEOTIDE SEQUENCE [LARGE SCALE GENOMIC DNA]</scope>
    <source>
        <strain>Sd197</strain>
    </source>
</reference>
<gene>
    <name evidence="1" type="primary">ycaD</name>
    <name type="ordered locus">SDY_2363</name>
</gene>
<protein>
    <recommendedName>
        <fullName evidence="1">Uncharacterized MFS-type transporter YcaD</fullName>
    </recommendedName>
</protein>
<proteinExistence type="inferred from homology"/>
<accession>Q32E16</accession>
<keyword id="KW-0997">Cell inner membrane</keyword>
<keyword id="KW-1003">Cell membrane</keyword>
<keyword id="KW-0472">Membrane</keyword>
<keyword id="KW-1185">Reference proteome</keyword>
<keyword id="KW-0812">Transmembrane</keyword>
<keyword id="KW-1133">Transmembrane helix</keyword>
<keyword id="KW-0813">Transport</keyword>
<evidence type="ECO:0000255" key="1">
    <source>
        <dbReference type="HAMAP-Rule" id="MF_01149"/>
    </source>
</evidence>
<sequence>MSTYTRPVMLLLSGLLLLTLAIAVLNTLVPLWLAQEHMSTWQVGVVSSSYFTGNLVGTLLTGYVIKRIGFNRSYYLASFIFAAGCAGLGLMIGFWSWLAWRFVAGVGCAMIWVVVESALMCSGTSRNRGRLLAAYMMVYYVGTFLGQLLVSKVSTELMSVLPWVTGLTLAGILPLLFTRVLNQQAENHDSTSITSMLKLRQARLGVNGCIISGIVLGSLYGLMPLYLNHKGVSNASIGFWMAVLVSAGILGQWPIGRLADKFGRLLVLRVQVFVVILGSIAMLSQAAMAPALFILGAAGFTLYPVAMAWACEKVEHHQLVAMNQALLLSYTVGSLLGPSFTAMLMQNFSDNLLFIMIASVSFIYLLMLLRNAGHTPKPVAHV</sequence>